<sequence length="378" mass="41792">MTNKKVVVLVAGGTGGHLFPAEALAVELRQRGYDVHLATDERAKRFVRHFDEKHIHIISSATLVRHHPFALIKTFWLLLRGMVQSWILFRKLRPVLVGGFGGYPTVPPVWVAALTGRVTFIHEQNAVMGRANRVLATRVNAIASGLLLENKIHIHKTFVTGNPVREAILKAAEIPYCASTSKQPFYFLVFGGSQGASAFSRIVPEAVKLLDHDIRERLHIVQQVRGEEIDLAKIYQDMGVQAEVAPFFDNMVEHIARSHFIMSRAGASTVCEIAIIGRPALLIPYPHALDHDQAANAALLAARGGAQIMLEKDLNAQILSSLLTKFCCEPHSLEQRALAAKKVGKPQATRVLADMAEALIVGRSLLDMKREFFDENTT</sequence>
<accession>A1UTC5</accession>
<feature type="chain" id="PRO_0000315069" description="UDP-N-acetylglucosamine--N-acetylmuramyl-(pentapeptide) pyrophosphoryl-undecaprenol N-acetylglucosamine transferase">
    <location>
        <begin position="1"/>
        <end position="378"/>
    </location>
</feature>
<feature type="binding site" evidence="1">
    <location>
        <begin position="14"/>
        <end position="16"/>
    </location>
    <ligand>
        <name>UDP-N-acetyl-alpha-D-glucosamine</name>
        <dbReference type="ChEBI" id="CHEBI:57705"/>
    </ligand>
</feature>
<feature type="binding site" evidence="1">
    <location>
        <position position="125"/>
    </location>
    <ligand>
        <name>UDP-N-acetyl-alpha-D-glucosamine</name>
        <dbReference type="ChEBI" id="CHEBI:57705"/>
    </ligand>
</feature>
<feature type="binding site" evidence="1">
    <location>
        <position position="165"/>
    </location>
    <ligand>
        <name>UDP-N-acetyl-alpha-D-glucosamine</name>
        <dbReference type="ChEBI" id="CHEBI:57705"/>
    </ligand>
</feature>
<feature type="binding site" evidence="1">
    <location>
        <position position="193"/>
    </location>
    <ligand>
        <name>UDP-N-acetyl-alpha-D-glucosamine</name>
        <dbReference type="ChEBI" id="CHEBI:57705"/>
    </ligand>
</feature>
<feature type="binding site" evidence="1">
    <location>
        <position position="293"/>
    </location>
    <ligand>
        <name>UDP-N-acetyl-alpha-D-glucosamine</name>
        <dbReference type="ChEBI" id="CHEBI:57705"/>
    </ligand>
</feature>
<evidence type="ECO:0000255" key="1">
    <source>
        <dbReference type="HAMAP-Rule" id="MF_00033"/>
    </source>
</evidence>
<name>MURG_BARBK</name>
<proteinExistence type="inferred from homology"/>
<dbReference type="EC" id="2.4.1.227" evidence="1"/>
<dbReference type="EMBL" id="CP000524">
    <property type="protein sequence ID" value="ABM45600.1"/>
    <property type="molecule type" value="Genomic_DNA"/>
</dbReference>
<dbReference type="RefSeq" id="WP_005767430.1">
    <property type="nucleotide sequence ID" value="NC_008783.1"/>
</dbReference>
<dbReference type="SMR" id="A1UTC5"/>
<dbReference type="STRING" id="360095.BARBAKC583_0947"/>
<dbReference type="CAZy" id="GT28">
    <property type="family name" value="Glycosyltransferase Family 28"/>
</dbReference>
<dbReference type="GeneID" id="4683834"/>
<dbReference type="KEGG" id="bbk:BARBAKC583_0947"/>
<dbReference type="eggNOG" id="COG0707">
    <property type="taxonomic scope" value="Bacteria"/>
</dbReference>
<dbReference type="HOGENOM" id="CLU_037404_2_1_5"/>
<dbReference type="OrthoDB" id="9808936at2"/>
<dbReference type="UniPathway" id="UPA00219"/>
<dbReference type="Proteomes" id="UP000000643">
    <property type="component" value="Chromosome"/>
</dbReference>
<dbReference type="GO" id="GO:0005886">
    <property type="term" value="C:plasma membrane"/>
    <property type="evidence" value="ECO:0007669"/>
    <property type="project" value="UniProtKB-SubCell"/>
</dbReference>
<dbReference type="GO" id="GO:0051991">
    <property type="term" value="F:UDP-N-acetyl-D-glucosamine:N-acetylmuramoyl-L-alanyl-D-glutamyl-meso-2,6-diaminopimelyl-D-alanyl-D-alanine-diphosphoundecaprenol 4-beta-N-acetylglucosaminlytransferase activity"/>
    <property type="evidence" value="ECO:0007669"/>
    <property type="project" value="RHEA"/>
</dbReference>
<dbReference type="GO" id="GO:0050511">
    <property type="term" value="F:undecaprenyldiphospho-muramoylpentapeptide beta-N-acetylglucosaminyltransferase activity"/>
    <property type="evidence" value="ECO:0007669"/>
    <property type="project" value="UniProtKB-UniRule"/>
</dbReference>
<dbReference type="GO" id="GO:0005975">
    <property type="term" value="P:carbohydrate metabolic process"/>
    <property type="evidence" value="ECO:0007669"/>
    <property type="project" value="InterPro"/>
</dbReference>
<dbReference type="GO" id="GO:0051301">
    <property type="term" value="P:cell division"/>
    <property type="evidence" value="ECO:0007669"/>
    <property type="project" value="UniProtKB-KW"/>
</dbReference>
<dbReference type="GO" id="GO:0071555">
    <property type="term" value="P:cell wall organization"/>
    <property type="evidence" value="ECO:0007669"/>
    <property type="project" value="UniProtKB-KW"/>
</dbReference>
<dbReference type="GO" id="GO:0030259">
    <property type="term" value="P:lipid glycosylation"/>
    <property type="evidence" value="ECO:0007669"/>
    <property type="project" value="UniProtKB-UniRule"/>
</dbReference>
<dbReference type="GO" id="GO:0009252">
    <property type="term" value="P:peptidoglycan biosynthetic process"/>
    <property type="evidence" value="ECO:0007669"/>
    <property type="project" value="UniProtKB-UniRule"/>
</dbReference>
<dbReference type="GO" id="GO:0008360">
    <property type="term" value="P:regulation of cell shape"/>
    <property type="evidence" value="ECO:0007669"/>
    <property type="project" value="UniProtKB-KW"/>
</dbReference>
<dbReference type="CDD" id="cd03785">
    <property type="entry name" value="GT28_MurG"/>
    <property type="match status" value="1"/>
</dbReference>
<dbReference type="Gene3D" id="3.40.50.2000">
    <property type="entry name" value="Glycogen Phosphorylase B"/>
    <property type="match status" value="2"/>
</dbReference>
<dbReference type="HAMAP" id="MF_00033">
    <property type="entry name" value="MurG"/>
    <property type="match status" value="1"/>
</dbReference>
<dbReference type="InterPro" id="IPR006009">
    <property type="entry name" value="GlcNAc_MurG"/>
</dbReference>
<dbReference type="InterPro" id="IPR007235">
    <property type="entry name" value="Glyco_trans_28_C"/>
</dbReference>
<dbReference type="InterPro" id="IPR004276">
    <property type="entry name" value="GlycoTrans_28_N"/>
</dbReference>
<dbReference type="PANTHER" id="PTHR21015:SF22">
    <property type="entry name" value="GLYCOSYLTRANSFERASE"/>
    <property type="match status" value="1"/>
</dbReference>
<dbReference type="PANTHER" id="PTHR21015">
    <property type="entry name" value="UDP-N-ACETYLGLUCOSAMINE--N-ACETYLMURAMYL-(PENTAPEPTIDE) PYROPHOSPHORYL-UNDECAPRENOL N-ACETYLGLUCOSAMINE TRANSFERASE 1"/>
    <property type="match status" value="1"/>
</dbReference>
<dbReference type="Pfam" id="PF04101">
    <property type="entry name" value="Glyco_tran_28_C"/>
    <property type="match status" value="1"/>
</dbReference>
<dbReference type="Pfam" id="PF03033">
    <property type="entry name" value="Glyco_transf_28"/>
    <property type="match status" value="1"/>
</dbReference>
<dbReference type="SUPFAM" id="SSF53756">
    <property type="entry name" value="UDP-Glycosyltransferase/glycogen phosphorylase"/>
    <property type="match status" value="1"/>
</dbReference>
<organism>
    <name type="scientific">Bartonella bacilliformis (strain ATCC 35685 / KC583 / Herrer 020/F12,63)</name>
    <dbReference type="NCBI Taxonomy" id="360095"/>
    <lineage>
        <taxon>Bacteria</taxon>
        <taxon>Pseudomonadati</taxon>
        <taxon>Pseudomonadota</taxon>
        <taxon>Alphaproteobacteria</taxon>
        <taxon>Hyphomicrobiales</taxon>
        <taxon>Bartonellaceae</taxon>
        <taxon>Bartonella</taxon>
    </lineage>
</organism>
<comment type="function">
    <text evidence="1">Cell wall formation. Catalyzes the transfer of a GlcNAc subunit on undecaprenyl-pyrophosphoryl-MurNAc-pentapeptide (lipid intermediate I) to form undecaprenyl-pyrophosphoryl-MurNAc-(pentapeptide)GlcNAc (lipid intermediate II).</text>
</comment>
<comment type="catalytic activity">
    <reaction evidence="1">
        <text>di-trans,octa-cis-undecaprenyl diphospho-N-acetyl-alpha-D-muramoyl-L-alanyl-D-glutamyl-meso-2,6-diaminopimeloyl-D-alanyl-D-alanine + UDP-N-acetyl-alpha-D-glucosamine = di-trans,octa-cis-undecaprenyl diphospho-[N-acetyl-alpha-D-glucosaminyl-(1-&gt;4)]-N-acetyl-alpha-D-muramoyl-L-alanyl-D-glutamyl-meso-2,6-diaminopimeloyl-D-alanyl-D-alanine + UDP + H(+)</text>
        <dbReference type="Rhea" id="RHEA:31227"/>
        <dbReference type="ChEBI" id="CHEBI:15378"/>
        <dbReference type="ChEBI" id="CHEBI:57705"/>
        <dbReference type="ChEBI" id="CHEBI:58223"/>
        <dbReference type="ChEBI" id="CHEBI:61387"/>
        <dbReference type="ChEBI" id="CHEBI:61388"/>
        <dbReference type="EC" id="2.4.1.227"/>
    </reaction>
</comment>
<comment type="pathway">
    <text evidence="1">Cell wall biogenesis; peptidoglycan biosynthesis.</text>
</comment>
<comment type="subcellular location">
    <subcellularLocation>
        <location evidence="1">Cell inner membrane</location>
        <topology evidence="1">Peripheral membrane protein</topology>
        <orientation evidence="1">Cytoplasmic side</orientation>
    </subcellularLocation>
</comment>
<comment type="similarity">
    <text evidence="1">Belongs to the glycosyltransferase 28 family. MurG subfamily.</text>
</comment>
<gene>
    <name evidence="1" type="primary">murG</name>
    <name type="ordered locus">BARBAKC583_0947</name>
</gene>
<reference key="1">
    <citation type="submission" date="2006-12" db="EMBL/GenBank/DDBJ databases">
        <authorList>
            <person name="Hendrix L."/>
            <person name="Mohamoud Y."/>
            <person name="Radune D."/>
            <person name="Shvartsbeyn A."/>
            <person name="Daugherty S."/>
            <person name="Dodson R."/>
            <person name="Durkin A.S."/>
            <person name="Harkins D."/>
            <person name="Huot H."/>
            <person name="Kothari S.P."/>
            <person name="Madupu R."/>
            <person name="Li J."/>
            <person name="Nelson W.C."/>
            <person name="Shrivastava S."/>
            <person name="Giglio M.G."/>
            <person name="Haft D."/>
            <person name="Selengut J."/>
            <person name="Fraser-Ligget C."/>
            <person name="Seshadri R."/>
        </authorList>
    </citation>
    <scope>NUCLEOTIDE SEQUENCE [LARGE SCALE GENOMIC DNA]</scope>
    <source>
        <strain>ATCC 35685 / KC583 / Herrer 020/F12,63</strain>
    </source>
</reference>
<protein>
    <recommendedName>
        <fullName evidence="1">UDP-N-acetylglucosamine--N-acetylmuramyl-(pentapeptide) pyrophosphoryl-undecaprenol N-acetylglucosamine transferase</fullName>
        <ecNumber evidence="1">2.4.1.227</ecNumber>
    </recommendedName>
    <alternativeName>
        <fullName evidence="1">Undecaprenyl-PP-MurNAc-pentapeptide-UDPGlcNAc GlcNAc transferase</fullName>
    </alternativeName>
</protein>
<keyword id="KW-0131">Cell cycle</keyword>
<keyword id="KW-0132">Cell division</keyword>
<keyword id="KW-0997">Cell inner membrane</keyword>
<keyword id="KW-1003">Cell membrane</keyword>
<keyword id="KW-0133">Cell shape</keyword>
<keyword id="KW-0961">Cell wall biogenesis/degradation</keyword>
<keyword id="KW-0328">Glycosyltransferase</keyword>
<keyword id="KW-0472">Membrane</keyword>
<keyword id="KW-0573">Peptidoglycan synthesis</keyword>
<keyword id="KW-0808">Transferase</keyword>